<evidence type="ECO:0000250" key="1"/>
<evidence type="ECO:0000250" key="2">
    <source>
        <dbReference type="UniProtKB" id="Q3U8K7"/>
    </source>
</evidence>
<evidence type="ECO:0000250" key="3">
    <source>
        <dbReference type="UniProtKB" id="Q4FZB7"/>
    </source>
</evidence>
<evidence type="ECO:0000255" key="4">
    <source>
        <dbReference type="PROSITE-ProRule" id="PRU00190"/>
    </source>
</evidence>
<evidence type="ECO:0000255" key="5">
    <source>
        <dbReference type="PROSITE-ProRule" id="PRU00903"/>
    </source>
</evidence>
<evidence type="ECO:0000256" key="6">
    <source>
        <dbReference type="SAM" id="MobiDB-lite"/>
    </source>
</evidence>
<evidence type="ECO:0000305" key="7"/>
<evidence type="ECO:0000312" key="8">
    <source>
        <dbReference type="RGD" id="1311637"/>
    </source>
</evidence>
<organism>
    <name type="scientific">Rattus norvegicus</name>
    <name type="common">Rat</name>
    <dbReference type="NCBI Taxonomy" id="10116"/>
    <lineage>
        <taxon>Eukaryota</taxon>
        <taxon>Metazoa</taxon>
        <taxon>Chordata</taxon>
        <taxon>Craniata</taxon>
        <taxon>Vertebrata</taxon>
        <taxon>Euteleostomi</taxon>
        <taxon>Mammalia</taxon>
        <taxon>Eutheria</taxon>
        <taxon>Euarchontoglires</taxon>
        <taxon>Glires</taxon>
        <taxon>Rodentia</taxon>
        <taxon>Myomorpha</taxon>
        <taxon>Muroidea</taxon>
        <taxon>Muridae</taxon>
        <taxon>Murinae</taxon>
        <taxon>Rattus</taxon>
    </lineage>
</organism>
<name>KMT5B_RAT</name>
<keyword id="KW-0156">Chromatin regulator</keyword>
<keyword id="KW-0158">Chromosome</keyword>
<keyword id="KW-1017">Isopeptide bond</keyword>
<keyword id="KW-0479">Metal-binding</keyword>
<keyword id="KW-0489">Methyltransferase</keyword>
<keyword id="KW-0517">Myogenesis</keyword>
<keyword id="KW-0539">Nucleus</keyword>
<keyword id="KW-1185">Reference proteome</keyword>
<keyword id="KW-0678">Repressor</keyword>
<keyword id="KW-0949">S-adenosyl-L-methionine</keyword>
<keyword id="KW-0804">Transcription</keyword>
<keyword id="KW-0805">Transcription regulation</keyword>
<keyword id="KW-0808">Transferase</keyword>
<keyword id="KW-0832">Ubl conjugation</keyword>
<keyword id="KW-0862">Zinc</keyword>
<dbReference type="EC" id="2.1.1.362" evidence="3"/>
<dbReference type="EC" id="2.1.1.361" evidence="3"/>
<dbReference type="EMBL" id="AABR03001123">
    <property type="status" value="NOT_ANNOTATED_CDS"/>
    <property type="molecule type" value="Genomic_DNA"/>
</dbReference>
<dbReference type="RefSeq" id="NP_001101982.1">
    <property type="nucleotide sequence ID" value="NM_001108512.2"/>
</dbReference>
<dbReference type="RefSeq" id="XP_038939567.1">
    <property type="nucleotide sequence ID" value="XM_039083639.2"/>
</dbReference>
<dbReference type="RefSeq" id="XP_038939570.1">
    <property type="nucleotide sequence ID" value="XM_039083642.1"/>
</dbReference>
<dbReference type="SMR" id="P0C2N5"/>
<dbReference type="FunCoup" id="P0C2N5">
    <property type="interactions" value="3117"/>
</dbReference>
<dbReference type="STRING" id="10116.ENSRNOP00000022486"/>
<dbReference type="iPTMnet" id="P0C2N5"/>
<dbReference type="PhosphoSitePlus" id="P0C2N5"/>
<dbReference type="PaxDb" id="10116-ENSRNOP00000022486"/>
<dbReference type="Ensembl" id="ENSRNOT00000022486.7">
    <property type="protein sequence ID" value="ENSRNOP00000022486.5"/>
    <property type="gene ID" value="ENSRNOG00000016790.7"/>
</dbReference>
<dbReference type="GeneID" id="361688"/>
<dbReference type="KEGG" id="rno:361688"/>
<dbReference type="UCSC" id="RGD:1311637">
    <property type="organism name" value="rat"/>
</dbReference>
<dbReference type="AGR" id="RGD:1311637"/>
<dbReference type="CTD" id="51111"/>
<dbReference type="RGD" id="1311637">
    <property type="gene designation" value="Kmt5b"/>
</dbReference>
<dbReference type="eggNOG" id="KOG2589">
    <property type="taxonomic scope" value="Eukaryota"/>
</dbReference>
<dbReference type="GeneTree" id="ENSGT00940000156431"/>
<dbReference type="HOGENOM" id="CLU_328991_0_0_1"/>
<dbReference type="InParanoid" id="P0C2N5"/>
<dbReference type="OMA" id="NDHAQTK"/>
<dbReference type="OrthoDB" id="6627536at2759"/>
<dbReference type="PhylomeDB" id="P0C2N5"/>
<dbReference type="TreeFam" id="TF106433"/>
<dbReference type="Reactome" id="R-RNO-3214841">
    <property type="pathway name" value="PKMTs methylate histone lysines"/>
</dbReference>
<dbReference type="PRO" id="PR:P0C2N5"/>
<dbReference type="Proteomes" id="UP000002494">
    <property type="component" value="Chromosome 1"/>
</dbReference>
<dbReference type="Bgee" id="ENSRNOG00000016790">
    <property type="expression patterns" value="Expressed in thymus and 20 other cell types or tissues"/>
</dbReference>
<dbReference type="GO" id="GO:0005813">
    <property type="term" value="C:centrosome"/>
    <property type="evidence" value="ECO:0007669"/>
    <property type="project" value="Ensembl"/>
</dbReference>
<dbReference type="GO" id="GO:0036064">
    <property type="term" value="C:ciliary basal body"/>
    <property type="evidence" value="ECO:0007669"/>
    <property type="project" value="Ensembl"/>
</dbReference>
<dbReference type="GO" id="GO:0000779">
    <property type="term" value="C:condensed chromosome, centromeric region"/>
    <property type="evidence" value="ECO:0000266"/>
    <property type="project" value="RGD"/>
</dbReference>
<dbReference type="GO" id="GO:0036464">
    <property type="term" value="C:cytoplasmic ribonucleoprotein granule"/>
    <property type="evidence" value="ECO:0007669"/>
    <property type="project" value="Ensembl"/>
</dbReference>
<dbReference type="GO" id="GO:0001650">
    <property type="term" value="C:fibrillar center"/>
    <property type="evidence" value="ECO:0007669"/>
    <property type="project" value="Ensembl"/>
</dbReference>
<dbReference type="GO" id="GO:0045171">
    <property type="term" value="C:intercellular bridge"/>
    <property type="evidence" value="ECO:0007669"/>
    <property type="project" value="Ensembl"/>
</dbReference>
<dbReference type="GO" id="GO:0072686">
    <property type="term" value="C:mitotic spindle"/>
    <property type="evidence" value="ECO:0007669"/>
    <property type="project" value="Ensembl"/>
</dbReference>
<dbReference type="GO" id="GO:0005654">
    <property type="term" value="C:nucleoplasm"/>
    <property type="evidence" value="ECO:0007669"/>
    <property type="project" value="Ensembl"/>
</dbReference>
<dbReference type="GO" id="GO:0005634">
    <property type="term" value="C:nucleus"/>
    <property type="evidence" value="ECO:0000318"/>
    <property type="project" value="GO_Central"/>
</dbReference>
<dbReference type="GO" id="GO:0005886">
    <property type="term" value="C:plasma membrane"/>
    <property type="evidence" value="ECO:0007669"/>
    <property type="project" value="Ensembl"/>
</dbReference>
<dbReference type="GO" id="GO:0003682">
    <property type="term" value="F:chromatin binding"/>
    <property type="evidence" value="ECO:0000250"/>
    <property type="project" value="UniProtKB"/>
</dbReference>
<dbReference type="GO" id="GO:0042799">
    <property type="term" value="F:histone H4K20 methyltransferase activity"/>
    <property type="evidence" value="ECO:0000250"/>
    <property type="project" value="UniProtKB"/>
</dbReference>
<dbReference type="GO" id="GO:0140944">
    <property type="term" value="F:histone H4K20 monomethyltransferase activity"/>
    <property type="evidence" value="ECO:0007669"/>
    <property type="project" value="UniProtKB-EC"/>
</dbReference>
<dbReference type="GO" id="GO:0140941">
    <property type="term" value="F:histone H4K20me methyltransferase activity"/>
    <property type="evidence" value="ECO:0007669"/>
    <property type="project" value="UniProtKB-EC"/>
</dbReference>
<dbReference type="GO" id="GO:0042054">
    <property type="term" value="F:histone methyltransferase activity"/>
    <property type="evidence" value="ECO:0000250"/>
    <property type="project" value="UniProtKB"/>
</dbReference>
<dbReference type="GO" id="GO:0046872">
    <property type="term" value="F:metal ion binding"/>
    <property type="evidence" value="ECO:0007669"/>
    <property type="project" value="UniProtKB-KW"/>
</dbReference>
<dbReference type="GO" id="GO:1904047">
    <property type="term" value="F:S-adenosyl-L-methionine binding"/>
    <property type="evidence" value="ECO:0000250"/>
    <property type="project" value="UniProtKB"/>
</dbReference>
<dbReference type="GO" id="GO:0006281">
    <property type="term" value="P:DNA repair"/>
    <property type="evidence" value="ECO:0000250"/>
    <property type="project" value="UniProtKB"/>
</dbReference>
<dbReference type="GO" id="GO:0032259">
    <property type="term" value="P:methylation"/>
    <property type="evidence" value="ECO:0007669"/>
    <property type="project" value="UniProtKB-KW"/>
</dbReference>
<dbReference type="GO" id="GO:0007517">
    <property type="term" value="P:muscle organ development"/>
    <property type="evidence" value="ECO:0007669"/>
    <property type="project" value="UniProtKB-KW"/>
</dbReference>
<dbReference type="GO" id="GO:2001034">
    <property type="term" value="P:positive regulation of double-strand break repair via nonhomologous end joining"/>
    <property type="evidence" value="ECO:0000250"/>
    <property type="project" value="UniProtKB"/>
</dbReference>
<dbReference type="GO" id="GO:0045830">
    <property type="term" value="P:positive regulation of isotype switching"/>
    <property type="evidence" value="ECO:0000250"/>
    <property type="project" value="UniProtKB"/>
</dbReference>
<dbReference type="CDD" id="cd19184">
    <property type="entry name" value="SET_KMT5B"/>
    <property type="match status" value="1"/>
</dbReference>
<dbReference type="FunFam" id="1.10.10.1700:FF:000001">
    <property type="entry name" value="Histone-lysine N-methyltransferase"/>
    <property type="match status" value="1"/>
</dbReference>
<dbReference type="FunFam" id="2.170.270.10:FF:000006">
    <property type="entry name" value="Histone-lysine N-methyltransferase"/>
    <property type="match status" value="1"/>
</dbReference>
<dbReference type="Gene3D" id="1.10.10.1700">
    <property type="entry name" value="Histone-lysine N-methyltransferase"/>
    <property type="match status" value="1"/>
</dbReference>
<dbReference type="Gene3D" id="2.170.270.10">
    <property type="entry name" value="SET domain"/>
    <property type="match status" value="1"/>
</dbReference>
<dbReference type="InterPro" id="IPR041938">
    <property type="entry name" value="Hist-Lys_N-MTase_N"/>
</dbReference>
<dbReference type="InterPro" id="IPR044424">
    <property type="entry name" value="KMT5B_SET"/>
</dbReference>
<dbReference type="InterPro" id="IPR001214">
    <property type="entry name" value="SET_dom"/>
</dbReference>
<dbReference type="InterPro" id="IPR046341">
    <property type="entry name" value="SET_dom_sf"/>
</dbReference>
<dbReference type="InterPro" id="IPR039977">
    <property type="entry name" value="Suv4-20/Set9"/>
</dbReference>
<dbReference type="InterPro" id="IPR025790">
    <property type="entry name" value="Suv4-20_animal"/>
</dbReference>
<dbReference type="PANTHER" id="PTHR12977:SF12">
    <property type="entry name" value="HISTONE-LYSINE N-METHYLTRANSFERASE KMT5B"/>
    <property type="match status" value="1"/>
</dbReference>
<dbReference type="PANTHER" id="PTHR12977">
    <property type="entry name" value="SUPPRESSOR OF VARIEGATION 4-20-RELATED"/>
    <property type="match status" value="1"/>
</dbReference>
<dbReference type="Pfam" id="PF00856">
    <property type="entry name" value="SET"/>
    <property type="match status" value="1"/>
</dbReference>
<dbReference type="SMART" id="SM00317">
    <property type="entry name" value="SET"/>
    <property type="match status" value="1"/>
</dbReference>
<dbReference type="SUPFAM" id="SSF82199">
    <property type="entry name" value="SET domain"/>
    <property type="match status" value="1"/>
</dbReference>
<dbReference type="PROSITE" id="PS51570">
    <property type="entry name" value="SAM_MT43_SUVAR420_2"/>
    <property type="match status" value="1"/>
</dbReference>
<dbReference type="PROSITE" id="PS50280">
    <property type="entry name" value="SET"/>
    <property type="match status" value="1"/>
</dbReference>
<gene>
    <name evidence="8" type="primary">Kmt5b</name>
    <name type="synonym">Suv420h1</name>
</gene>
<comment type="function">
    <text evidence="2 3">Histone methyltransferase that specifically methylates monomethylated 'Lys-20' (H4K20me1) and dimethylated 'Lys-20' (H4K20me2) of histone H4 to produce respectively dimethylated 'Lys-20' (H4K20me2) and trimethylated 'Lys-20' (H4K20me3) and thus regulates transcription and maintenance of genome integrity. In vitro also methylates unmodified 'Lys-20' (H4K20me0) of histone H4 and nucleosomes (By similarity). H4 'Lys-20' trimethylation represents a specific tag for epigenetic transcriptional repression. Mainly functions in pericentric heterochromatin regions, thereby playing a central role in the establishment of constitutive heterochromatin in these regions. KMT5B is targeted to histone H3 via its interaction with RB1 family proteins (RB1, RBL1 and RBL2) (By similarity). Plays a role in myogenesis by regulating the expression of target genes, such as EID3. Facilitates TP53BP1 foci formation upon DNA damage and proficient non-homologous end-joining (NHEJ)-directed DNA repair by catalyzing the di- and trimethylation of 'Lys-20' of histone H4 (By similarity). May play a role in class switch reconbination by catalyzing the di- and trimethylation of 'Lys-20' of histone H4 (By similarity).</text>
</comment>
<comment type="catalytic activity">
    <reaction evidence="3">
        <text>N(6)-methyl-L-lysyl(20)-[histone H4] + S-adenosyl-L-methionine = N(6),N(6)-dimethyl-L-lysyl(20)-[histone H4] + S-adenosyl-L-homocysteine + H(+)</text>
        <dbReference type="Rhea" id="RHEA:60348"/>
        <dbReference type="Rhea" id="RHEA-COMP:15555"/>
        <dbReference type="Rhea" id="RHEA-COMP:15556"/>
        <dbReference type="ChEBI" id="CHEBI:15378"/>
        <dbReference type="ChEBI" id="CHEBI:57856"/>
        <dbReference type="ChEBI" id="CHEBI:59789"/>
        <dbReference type="ChEBI" id="CHEBI:61929"/>
        <dbReference type="ChEBI" id="CHEBI:61976"/>
        <dbReference type="EC" id="2.1.1.362"/>
    </reaction>
    <physiologicalReaction direction="left-to-right" evidence="3">
        <dbReference type="Rhea" id="RHEA:60349"/>
    </physiologicalReaction>
</comment>
<comment type="catalytic activity">
    <reaction evidence="3">
        <text>N(6),N(6)-dimethyl-L-lysyl(20)-[histone H4] + S-adenosyl-L-methionine = N(6),N(6),N(6)-trimethyl-L-lysyl(20)-[histone H4] + S-adenosyl-L-homocysteine + H(+)</text>
        <dbReference type="Rhea" id="RHEA:61992"/>
        <dbReference type="Rhea" id="RHEA-COMP:15556"/>
        <dbReference type="Rhea" id="RHEA-COMP:15998"/>
        <dbReference type="ChEBI" id="CHEBI:15378"/>
        <dbReference type="ChEBI" id="CHEBI:57856"/>
        <dbReference type="ChEBI" id="CHEBI:59789"/>
        <dbReference type="ChEBI" id="CHEBI:61961"/>
        <dbReference type="ChEBI" id="CHEBI:61976"/>
    </reaction>
    <physiologicalReaction direction="left-to-right" evidence="3">
        <dbReference type="Rhea" id="RHEA:61993"/>
    </physiologicalReaction>
</comment>
<comment type="catalytic activity">
    <reaction evidence="3">
        <text>L-lysyl(20)-[histone H4] + S-adenosyl-L-methionine = N(6)-methyl-L-lysyl(20)-[histone H4] + S-adenosyl-L-homocysteine + H(+)</text>
        <dbReference type="Rhea" id="RHEA:60344"/>
        <dbReference type="Rhea" id="RHEA-COMP:15554"/>
        <dbReference type="Rhea" id="RHEA-COMP:15555"/>
        <dbReference type="ChEBI" id="CHEBI:15378"/>
        <dbReference type="ChEBI" id="CHEBI:29969"/>
        <dbReference type="ChEBI" id="CHEBI:57856"/>
        <dbReference type="ChEBI" id="CHEBI:59789"/>
        <dbReference type="ChEBI" id="CHEBI:61929"/>
        <dbReference type="EC" id="2.1.1.361"/>
    </reaction>
    <physiologicalReaction direction="left-to-right" evidence="3">
        <dbReference type="Rhea" id="RHEA:60345"/>
    </physiologicalReaction>
</comment>
<comment type="activity regulation">
    <text evidence="3">Inhibited by 6,7-Dichloro-N-cyclopentyl-4-(pyridin-4-yl)phthalazin-1-amine (A-196). A-196 is competitive with the histone peptide substrate H4K20me1 but non competitive with S-adenosyl-L-methionine.</text>
</comment>
<comment type="subunit">
    <text evidence="1 3">Homodimer (By similarity). Interacts with HP1 proteins CBX1, CBX3 and CBX5. Interacts with RB1 family proteins RB1, RBL1 and RBL2 (By similarity). Interacts (via C-terminus) with FRG1 (By similarity).</text>
</comment>
<comment type="subcellular location">
    <subcellularLocation>
        <location>Nucleus</location>
    </subcellularLocation>
    <subcellularLocation>
        <location evidence="1">Chromosome</location>
    </subcellularLocation>
    <text evidence="1">Associated with pericentric heterochromatin. CBX1 and CBX5 are required for the localization to pericentric heterochromatin (By similarity).</text>
</comment>
<comment type="similarity">
    <text evidence="5">Belongs to the class V-like SAM-binding methyltransferase superfamily. Histone-lysine methyltransferase family. Suvar4-20 subfamily.</text>
</comment>
<accession>P0C2N5</accession>
<reference key="1">
    <citation type="journal article" date="2004" name="Nature">
        <title>Genome sequence of the Brown Norway rat yields insights into mammalian evolution.</title>
        <authorList>
            <person name="Gibbs R.A."/>
            <person name="Weinstock G.M."/>
            <person name="Metzker M.L."/>
            <person name="Muzny D.M."/>
            <person name="Sodergren E.J."/>
            <person name="Scherer S."/>
            <person name="Scott G."/>
            <person name="Steffen D."/>
            <person name="Worley K.C."/>
            <person name="Burch P.E."/>
            <person name="Okwuonu G."/>
            <person name="Hines S."/>
            <person name="Lewis L."/>
            <person name="Deramo C."/>
            <person name="Delgado O."/>
            <person name="Dugan-Rocha S."/>
            <person name="Miner G."/>
            <person name="Morgan M."/>
            <person name="Hawes A."/>
            <person name="Gill R."/>
            <person name="Holt R.A."/>
            <person name="Adams M.D."/>
            <person name="Amanatides P.G."/>
            <person name="Baden-Tillson H."/>
            <person name="Barnstead M."/>
            <person name="Chin S."/>
            <person name="Evans C.A."/>
            <person name="Ferriera S."/>
            <person name="Fosler C."/>
            <person name="Glodek A."/>
            <person name="Gu Z."/>
            <person name="Jennings D."/>
            <person name="Kraft C.L."/>
            <person name="Nguyen T."/>
            <person name="Pfannkoch C.M."/>
            <person name="Sitter C."/>
            <person name="Sutton G.G."/>
            <person name="Venter J.C."/>
            <person name="Woodage T."/>
            <person name="Smith D."/>
            <person name="Lee H.-M."/>
            <person name="Gustafson E."/>
            <person name="Cahill P."/>
            <person name="Kana A."/>
            <person name="Doucette-Stamm L."/>
            <person name="Weinstock K."/>
            <person name="Fechtel K."/>
            <person name="Weiss R.B."/>
            <person name="Dunn D.M."/>
            <person name="Green E.D."/>
            <person name="Blakesley R.W."/>
            <person name="Bouffard G.G."/>
            <person name="De Jong P.J."/>
            <person name="Osoegawa K."/>
            <person name="Zhu B."/>
            <person name="Marra M."/>
            <person name="Schein J."/>
            <person name="Bosdet I."/>
            <person name="Fjell C."/>
            <person name="Jones S."/>
            <person name="Krzywinski M."/>
            <person name="Mathewson C."/>
            <person name="Siddiqui A."/>
            <person name="Wye N."/>
            <person name="McPherson J."/>
            <person name="Zhao S."/>
            <person name="Fraser C.M."/>
            <person name="Shetty J."/>
            <person name="Shatsman S."/>
            <person name="Geer K."/>
            <person name="Chen Y."/>
            <person name="Abramzon S."/>
            <person name="Nierman W.C."/>
            <person name="Havlak P.H."/>
            <person name="Chen R."/>
            <person name="Durbin K.J."/>
            <person name="Egan A."/>
            <person name="Ren Y."/>
            <person name="Song X.-Z."/>
            <person name="Li B."/>
            <person name="Liu Y."/>
            <person name="Qin X."/>
            <person name="Cawley S."/>
            <person name="Cooney A.J."/>
            <person name="D'Souza L.M."/>
            <person name="Martin K."/>
            <person name="Wu J.Q."/>
            <person name="Gonzalez-Garay M.L."/>
            <person name="Jackson A.R."/>
            <person name="Kalafus K.J."/>
            <person name="McLeod M.P."/>
            <person name="Milosavljevic A."/>
            <person name="Virk D."/>
            <person name="Volkov A."/>
            <person name="Wheeler D.A."/>
            <person name="Zhang Z."/>
            <person name="Bailey J.A."/>
            <person name="Eichler E.E."/>
            <person name="Tuzun E."/>
            <person name="Birney E."/>
            <person name="Mongin E."/>
            <person name="Ureta-Vidal A."/>
            <person name="Woodwark C."/>
            <person name="Zdobnov E."/>
            <person name="Bork P."/>
            <person name="Suyama M."/>
            <person name="Torrents D."/>
            <person name="Alexandersson M."/>
            <person name="Trask B.J."/>
            <person name="Young J.M."/>
            <person name="Huang H."/>
            <person name="Wang H."/>
            <person name="Xing H."/>
            <person name="Daniels S."/>
            <person name="Gietzen D."/>
            <person name="Schmidt J."/>
            <person name="Stevens K."/>
            <person name="Vitt U."/>
            <person name="Wingrove J."/>
            <person name="Camara F."/>
            <person name="Mar Alba M."/>
            <person name="Abril J.F."/>
            <person name="Guigo R."/>
            <person name="Smit A."/>
            <person name="Dubchak I."/>
            <person name="Rubin E.M."/>
            <person name="Couronne O."/>
            <person name="Poliakov A."/>
            <person name="Huebner N."/>
            <person name="Ganten D."/>
            <person name="Goesele C."/>
            <person name="Hummel O."/>
            <person name="Kreitler T."/>
            <person name="Lee Y.-A."/>
            <person name="Monti J."/>
            <person name="Schulz H."/>
            <person name="Zimdahl H."/>
            <person name="Himmelbauer H."/>
            <person name="Lehrach H."/>
            <person name="Jacob H.J."/>
            <person name="Bromberg S."/>
            <person name="Gullings-Handley J."/>
            <person name="Jensen-Seaman M.I."/>
            <person name="Kwitek A.E."/>
            <person name="Lazar J."/>
            <person name="Pasko D."/>
            <person name="Tonellato P.J."/>
            <person name="Twigger S."/>
            <person name="Ponting C.P."/>
            <person name="Duarte J.M."/>
            <person name="Rice S."/>
            <person name="Goodstadt L."/>
            <person name="Beatson S.A."/>
            <person name="Emes R.D."/>
            <person name="Winter E.E."/>
            <person name="Webber C."/>
            <person name="Brandt P."/>
            <person name="Nyakatura G."/>
            <person name="Adetobi M."/>
            <person name="Chiaromonte F."/>
            <person name="Elnitski L."/>
            <person name="Eswara P."/>
            <person name="Hardison R.C."/>
            <person name="Hou M."/>
            <person name="Kolbe D."/>
            <person name="Makova K."/>
            <person name="Miller W."/>
            <person name="Nekrutenko A."/>
            <person name="Riemer C."/>
            <person name="Schwartz S."/>
            <person name="Taylor J."/>
            <person name="Yang S."/>
            <person name="Zhang Y."/>
            <person name="Lindpaintner K."/>
            <person name="Andrews T.D."/>
            <person name="Caccamo M."/>
            <person name="Clamp M."/>
            <person name="Clarke L."/>
            <person name="Curwen V."/>
            <person name="Durbin R.M."/>
            <person name="Eyras E."/>
            <person name="Searle S.M."/>
            <person name="Cooper G.M."/>
            <person name="Batzoglou S."/>
            <person name="Brudno M."/>
            <person name="Sidow A."/>
            <person name="Stone E.A."/>
            <person name="Payseur B.A."/>
            <person name="Bourque G."/>
            <person name="Lopez-Otin C."/>
            <person name="Puente X.S."/>
            <person name="Chakrabarti K."/>
            <person name="Chatterji S."/>
            <person name="Dewey C."/>
            <person name="Pachter L."/>
            <person name="Bray N."/>
            <person name="Yap V.B."/>
            <person name="Caspi A."/>
            <person name="Tesler G."/>
            <person name="Pevzner P.A."/>
            <person name="Haussler D."/>
            <person name="Roskin K.M."/>
            <person name="Baertsch R."/>
            <person name="Clawson H."/>
            <person name="Furey T.S."/>
            <person name="Hinrichs A.S."/>
            <person name="Karolchik D."/>
            <person name="Kent W.J."/>
            <person name="Rosenbloom K.R."/>
            <person name="Trumbower H."/>
            <person name="Weirauch M."/>
            <person name="Cooper D.N."/>
            <person name="Stenson P.D."/>
            <person name="Ma B."/>
            <person name="Brent M."/>
            <person name="Arumugam M."/>
            <person name="Shteynberg D."/>
            <person name="Copley R.R."/>
            <person name="Taylor M.S."/>
            <person name="Riethman H."/>
            <person name="Mudunuri U."/>
            <person name="Peterson J."/>
            <person name="Guyer M."/>
            <person name="Felsenfeld A."/>
            <person name="Old S."/>
            <person name="Mockrin S."/>
            <person name="Collins F.S."/>
        </authorList>
    </citation>
    <scope>NUCLEOTIDE SEQUENCE [LARGE SCALE GENOMIC DNA]</scope>
    <source>
        <strain>Brown Norway</strain>
    </source>
</reference>
<protein>
    <recommendedName>
        <fullName evidence="7">Histone-lysine N-methyltransferase KMT5B</fullName>
    </recommendedName>
    <alternativeName>
        <fullName evidence="8">Lysine-specific methyltransferase 5B</fullName>
    </alternativeName>
    <alternativeName>
        <fullName>Suppressor of variegation 4-20 homolog 1</fullName>
        <shortName>Su(var)4-20 homolog 1</shortName>
        <shortName>Suv4-20h1</shortName>
    </alternativeName>
    <alternativeName>
        <fullName evidence="7">[histone H4]-N-methyl-L-lysine20 N-methyltransferase KMT5B</fullName>
        <ecNumber evidence="3">2.1.1.362</ecNumber>
    </alternativeName>
    <alternativeName>
        <fullName evidence="7">[histone H4]-lysine20 N-methyltransferase KMT5B</fullName>
        <ecNumber evidence="3">2.1.1.361</ecNumber>
    </alternativeName>
</protein>
<proteinExistence type="inferred from homology"/>
<sequence length="883" mass="98668">MKWLGDSKNMVVNGRRNGSKLSNDHQQNQSKLQHAGKDALKTGRNAVERRPNRCHGNSGFEGQSRYVPSSGMSAKELCENDDLATSLVLDPYLGFQTHKMNTSAFPSRSSRHISKADSFSHNNPMRFRPIKGRQEELKEVIERFKKDEHLEKAFKCLTSGEWARHYFLNKNKMQEKLFKEHVFIYLRMFATDSGFEILPCNRYSSEQNGAKIVATKEWKRNDKIELLVGCIAELSEIEENMLLRHGENDFSVMYSTRKNCAQLWLGPAAFINHDCRPNCKFVSTGRDTACVKALRDIEPGEEISCYYGDGFFGENNEFCECYTCERRGTGAFKSRVGLPAPAPVINSKYGLRETDKRLNRLKKLGDSSKSSDSQSVSSNTDADTTQEKDNATSNRKSSVGVKKNSKSRALTRQSMPRVPAASNSTSPKLVHMNNSRVPKKLRKPAKPLLSKIKLRNHCKRLDQKSTSRKLEMGNLVLKEPKVVLYKNLPIKKEREAEGPVHAAVGSGCLTRHAAREHRQNPGRGAHSQGDSLPCTYTTRRSLRTRTGLKETTDIKLAPSPLDGYKNGILEPYPDSGQQPTPEVLEELAPETALREEASQECPKSDSCPSRKKFRQGKPVKHLAKTEDCSPEHSFPGKDGLPDLPGPHPDQGEPSGTVRVPVSYTDSAPSPVGCSIVTPDSFTTKDSFRTAQSKKKRRVTRYDAQLILENSSGIPKLTLRRRHDSSSKTNDHESDSVNSSKISIKLSKDHESDSNLYVAKLSNGVSSGPGSSSTKLKIQLKRDEESRGPCAEGLHENGVCCSDPLSLLESQMEVDDYSQYEEDSTDDSSSSEGEEEEEDCEDDFDDDFIPLPPAKRLRLIVGKDSIDIDISSRRREDQSLRLNA</sequence>
<feature type="chain" id="PRO_0000281789" description="Histone-lysine N-methyltransferase KMT5B">
    <location>
        <begin position="1"/>
        <end position="883"/>
    </location>
</feature>
<feature type="domain" description="SET" evidence="4">
    <location>
        <begin position="193"/>
        <end position="308"/>
    </location>
</feature>
<feature type="region of interest" description="Disordered" evidence="6">
    <location>
        <begin position="1"/>
        <end position="66"/>
    </location>
</feature>
<feature type="region of interest" description="Disordered" evidence="6">
    <location>
        <begin position="103"/>
        <end position="124"/>
    </location>
</feature>
<feature type="region of interest" description="Disordered" evidence="6">
    <location>
        <begin position="363"/>
        <end position="435"/>
    </location>
</feature>
<feature type="region of interest" description="Disordered" evidence="6">
    <location>
        <begin position="515"/>
        <end position="740"/>
    </location>
</feature>
<feature type="region of interest" description="Disordered" evidence="6">
    <location>
        <begin position="760"/>
        <end position="779"/>
    </location>
</feature>
<feature type="region of interest" description="Disordered" evidence="6">
    <location>
        <begin position="812"/>
        <end position="848"/>
    </location>
</feature>
<feature type="compositionally biased region" description="Polar residues" evidence="6">
    <location>
        <begin position="19"/>
        <end position="32"/>
    </location>
</feature>
<feature type="compositionally biased region" description="Basic and acidic residues" evidence="6">
    <location>
        <begin position="35"/>
        <end position="51"/>
    </location>
</feature>
<feature type="compositionally biased region" description="Low complexity" evidence="6">
    <location>
        <begin position="367"/>
        <end position="378"/>
    </location>
</feature>
<feature type="compositionally biased region" description="Low complexity" evidence="6">
    <location>
        <begin position="393"/>
        <end position="402"/>
    </location>
</feature>
<feature type="compositionally biased region" description="Polar residues" evidence="6">
    <location>
        <begin position="421"/>
        <end position="435"/>
    </location>
</feature>
<feature type="compositionally biased region" description="Basic residues" evidence="6">
    <location>
        <begin position="609"/>
        <end position="622"/>
    </location>
</feature>
<feature type="compositionally biased region" description="Polar residues" evidence="6">
    <location>
        <begin position="677"/>
        <end position="690"/>
    </location>
</feature>
<feature type="compositionally biased region" description="Basic and acidic residues" evidence="6">
    <location>
        <begin position="723"/>
        <end position="734"/>
    </location>
</feature>
<feature type="compositionally biased region" description="Low complexity" evidence="6">
    <location>
        <begin position="761"/>
        <end position="772"/>
    </location>
</feature>
<feature type="compositionally biased region" description="Acidic residues" evidence="6">
    <location>
        <begin position="812"/>
        <end position="825"/>
    </location>
</feature>
<feature type="compositionally biased region" description="Acidic residues" evidence="6">
    <location>
        <begin position="831"/>
        <end position="847"/>
    </location>
</feature>
<feature type="binding site" evidence="3">
    <location>
        <position position="98"/>
    </location>
    <ligand>
        <name>S-adenosyl-L-methionine</name>
        <dbReference type="ChEBI" id="CHEBI:59789"/>
    </ligand>
</feature>
<feature type="binding site" evidence="3">
    <location>
        <begin position="203"/>
        <end position="206"/>
    </location>
    <ligand>
        <name>S-adenosyl-L-methionine</name>
        <dbReference type="ChEBI" id="CHEBI:59789"/>
    </ligand>
</feature>
<feature type="binding site" evidence="3">
    <location>
        <position position="210"/>
    </location>
    <ligand>
        <name>S-adenosyl-L-methionine</name>
        <dbReference type="ChEBI" id="CHEBI:59789"/>
    </ligand>
</feature>
<feature type="binding site" evidence="3">
    <location>
        <position position="257"/>
    </location>
    <ligand>
        <name>S-adenosyl-L-methionine</name>
        <dbReference type="ChEBI" id="CHEBI:59789"/>
    </ligand>
</feature>
<feature type="binding site" evidence="3">
    <location>
        <begin position="272"/>
        <end position="273"/>
    </location>
    <ligand>
        <name>S-adenosyl-L-methionine</name>
        <dbReference type="ChEBI" id="CHEBI:59789"/>
    </ligand>
</feature>
<feature type="binding site" evidence="3">
    <location>
        <position position="275"/>
    </location>
    <ligand>
        <name>Zn(2+)</name>
        <dbReference type="ChEBI" id="CHEBI:29105"/>
    </ligand>
</feature>
<feature type="binding site" evidence="3">
    <location>
        <position position="319"/>
    </location>
    <ligand>
        <name>Zn(2+)</name>
        <dbReference type="ChEBI" id="CHEBI:29105"/>
    </ligand>
</feature>
<feature type="binding site" evidence="3">
    <location>
        <position position="320"/>
    </location>
    <ligand>
        <name>S-adenosyl-L-methionine</name>
        <dbReference type="ChEBI" id="CHEBI:59789"/>
    </ligand>
</feature>
<feature type="binding site" evidence="3">
    <location>
        <position position="321"/>
    </location>
    <ligand>
        <name>Zn(2+)</name>
        <dbReference type="ChEBI" id="CHEBI:29105"/>
    </ligand>
</feature>
<feature type="binding site" evidence="3">
    <location>
        <position position="324"/>
    </location>
    <ligand>
        <name>Zn(2+)</name>
        <dbReference type="ChEBI" id="CHEBI:29105"/>
    </ligand>
</feature>
<feature type="cross-link" description="Glycyl lysine isopeptide (Lys-Gly) (interchain with G-Cter in SUMO2)" evidence="3">
    <location>
        <position position="555"/>
    </location>
</feature>